<accession>Q9CKH9</accession>
<organism>
    <name type="scientific">Pasteurella multocida (strain Pm70)</name>
    <dbReference type="NCBI Taxonomy" id="272843"/>
    <lineage>
        <taxon>Bacteria</taxon>
        <taxon>Pseudomonadati</taxon>
        <taxon>Pseudomonadota</taxon>
        <taxon>Gammaproteobacteria</taxon>
        <taxon>Pasteurellales</taxon>
        <taxon>Pasteurellaceae</taxon>
        <taxon>Pasteurella</taxon>
    </lineage>
</organism>
<reference key="1">
    <citation type="journal article" date="2001" name="Proc. Natl. Acad. Sci. U.S.A.">
        <title>Complete genomic sequence of Pasteurella multocida Pm70.</title>
        <authorList>
            <person name="May B.J."/>
            <person name="Zhang Q."/>
            <person name="Li L.L."/>
            <person name="Paustian M.L."/>
            <person name="Whittam T.S."/>
            <person name="Kapur V."/>
        </authorList>
    </citation>
    <scope>NUCLEOTIDE SEQUENCE [LARGE SCALE GENOMIC DNA]</scope>
    <source>
        <strain>Pm70</strain>
    </source>
</reference>
<sequence length="316" mass="35254">MTQLDSLRSMTVVVADTGDIEAIKQYQPQDATTNPSLILSASALPQYAPLIDDAIAYAKTKSDCPRQQLVDAEDKLAVNIGLEILKIIPGRISTEVDARLSYDTQATIEKARKLIKLYNEAGIENHRILIKIASTWQGIRAAEVLEKEGINCNLTLLFSEAQARACAEAGVYLISPFVGRILDWHKANTGRQDYPAAEDPGVISVTQIYNYYKQHNYKTVVMGASFRNVDEIIELAGCDRLTISPTLLSHLQAREGELVRKLAFSGELKDRPQPLTESEFYWQHNSDPMAVAKLAEGICKFAEDQEKLEKMLLERL</sequence>
<feature type="chain" id="PRO_0000173602" description="Transaldolase B">
    <location>
        <begin position="1"/>
        <end position="316"/>
    </location>
</feature>
<feature type="active site" description="Schiff-base intermediate with substrate" evidence="1">
    <location>
        <position position="131"/>
    </location>
</feature>
<protein>
    <recommendedName>
        <fullName>Transaldolase B</fullName>
        <ecNumber>2.2.1.2</ecNumber>
    </recommendedName>
</protein>
<evidence type="ECO:0000250" key="1"/>
<evidence type="ECO:0000305" key="2"/>
<name>TALB_PASMU</name>
<dbReference type="EC" id="2.2.1.2"/>
<dbReference type="EMBL" id="AE004439">
    <property type="protein sequence ID" value="AAK03723.1"/>
    <property type="molecule type" value="Genomic_DNA"/>
</dbReference>
<dbReference type="SMR" id="Q9CKH9"/>
<dbReference type="STRING" id="272843.PM1639"/>
<dbReference type="EnsemblBacteria" id="AAK03723">
    <property type="protein sequence ID" value="AAK03723"/>
    <property type="gene ID" value="PM1639"/>
</dbReference>
<dbReference type="KEGG" id="pmu:PM1639"/>
<dbReference type="PATRIC" id="fig|272843.6.peg.1658"/>
<dbReference type="HOGENOM" id="CLU_047470_0_1_6"/>
<dbReference type="OrthoDB" id="9809101at2"/>
<dbReference type="UniPathway" id="UPA00115">
    <property type="reaction ID" value="UER00414"/>
</dbReference>
<dbReference type="Proteomes" id="UP000000809">
    <property type="component" value="Chromosome"/>
</dbReference>
<dbReference type="GO" id="GO:0005829">
    <property type="term" value="C:cytosol"/>
    <property type="evidence" value="ECO:0007669"/>
    <property type="project" value="TreeGrafter"/>
</dbReference>
<dbReference type="GO" id="GO:0004801">
    <property type="term" value="F:transaldolase activity"/>
    <property type="evidence" value="ECO:0000250"/>
    <property type="project" value="UniProtKB"/>
</dbReference>
<dbReference type="GO" id="GO:0005975">
    <property type="term" value="P:carbohydrate metabolic process"/>
    <property type="evidence" value="ECO:0007669"/>
    <property type="project" value="InterPro"/>
</dbReference>
<dbReference type="GO" id="GO:0006098">
    <property type="term" value="P:pentose-phosphate shunt"/>
    <property type="evidence" value="ECO:0007669"/>
    <property type="project" value="UniProtKB-UniRule"/>
</dbReference>
<dbReference type="CDD" id="cd00957">
    <property type="entry name" value="Transaldolase_TalAB"/>
    <property type="match status" value="1"/>
</dbReference>
<dbReference type="FunFam" id="3.20.20.70:FF:000002">
    <property type="entry name" value="Transaldolase"/>
    <property type="match status" value="1"/>
</dbReference>
<dbReference type="Gene3D" id="3.20.20.70">
    <property type="entry name" value="Aldolase class I"/>
    <property type="match status" value="1"/>
</dbReference>
<dbReference type="HAMAP" id="MF_00492">
    <property type="entry name" value="Transaldolase_1"/>
    <property type="match status" value="1"/>
</dbReference>
<dbReference type="InterPro" id="IPR013785">
    <property type="entry name" value="Aldolase_TIM"/>
</dbReference>
<dbReference type="InterPro" id="IPR001585">
    <property type="entry name" value="TAL/FSA"/>
</dbReference>
<dbReference type="InterPro" id="IPR004730">
    <property type="entry name" value="Transaldolase_1"/>
</dbReference>
<dbReference type="InterPro" id="IPR018225">
    <property type="entry name" value="Transaldolase_AS"/>
</dbReference>
<dbReference type="NCBIfam" id="NF009001">
    <property type="entry name" value="PRK12346.1"/>
    <property type="match status" value="1"/>
</dbReference>
<dbReference type="NCBIfam" id="TIGR00874">
    <property type="entry name" value="talAB"/>
    <property type="match status" value="1"/>
</dbReference>
<dbReference type="PANTHER" id="PTHR10683">
    <property type="entry name" value="TRANSALDOLASE"/>
    <property type="match status" value="1"/>
</dbReference>
<dbReference type="PANTHER" id="PTHR10683:SF18">
    <property type="entry name" value="TRANSALDOLASE"/>
    <property type="match status" value="1"/>
</dbReference>
<dbReference type="Pfam" id="PF00923">
    <property type="entry name" value="TAL_FSA"/>
    <property type="match status" value="1"/>
</dbReference>
<dbReference type="SUPFAM" id="SSF51569">
    <property type="entry name" value="Aldolase"/>
    <property type="match status" value="1"/>
</dbReference>
<dbReference type="PROSITE" id="PS01054">
    <property type="entry name" value="TRANSALDOLASE_1"/>
    <property type="match status" value="1"/>
</dbReference>
<dbReference type="PROSITE" id="PS00958">
    <property type="entry name" value="TRANSALDOLASE_2"/>
    <property type="match status" value="1"/>
</dbReference>
<keyword id="KW-0963">Cytoplasm</keyword>
<keyword id="KW-0570">Pentose shunt</keyword>
<keyword id="KW-1185">Reference proteome</keyword>
<keyword id="KW-0704">Schiff base</keyword>
<keyword id="KW-0808">Transferase</keyword>
<comment type="function">
    <text evidence="1">Transaldolase is important for the balance of metabolites in the pentose-phosphate pathway.</text>
</comment>
<comment type="catalytic activity">
    <reaction>
        <text>D-sedoheptulose 7-phosphate + D-glyceraldehyde 3-phosphate = D-erythrose 4-phosphate + beta-D-fructose 6-phosphate</text>
        <dbReference type="Rhea" id="RHEA:17053"/>
        <dbReference type="ChEBI" id="CHEBI:16897"/>
        <dbReference type="ChEBI" id="CHEBI:57483"/>
        <dbReference type="ChEBI" id="CHEBI:57634"/>
        <dbReference type="ChEBI" id="CHEBI:59776"/>
        <dbReference type="EC" id="2.2.1.2"/>
    </reaction>
</comment>
<comment type="pathway">
    <text>Carbohydrate degradation; pentose phosphate pathway; D-glyceraldehyde 3-phosphate and beta-D-fructose 6-phosphate from D-ribose 5-phosphate and D-xylulose 5-phosphate (non-oxidative stage): step 2/3.</text>
</comment>
<comment type="subunit">
    <text evidence="1">Homodimer.</text>
</comment>
<comment type="subcellular location">
    <subcellularLocation>
        <location evidence="1">Cytoplasm</location>
    </subcellularLocation>
</comment>
<comment type="similarity">
    <text evidence="2">Belongs to the transaldolase family. Type 1 subfamily.</text>
</comment>
<proteinExistence type="inferred from homology"/>
<gene>
    <name type="primary">talB</name>
    <name type="synonym">tal_2</name>
    <name type="ordered locus">PM1639</name>
</gene>